<proteinExistence type="inferred from homology"/>
<reference key="1">
    <citation type="journal article" date="2002" name="DNA Res.">
        <title>Complete genomic sequence of nitrogen-fixing symbiotic bacterium Bradyrhizobium japonicum USDA110.</title>
        <authorList>
            <person name="Kaneko T."/>
            <person name="Nakamura Y."/>
            <person name="Sato S."/>
            <person name="Minamisawa K."/>
            <person name="Uchiumi T."/>
            <person name="Sasamoto S."/>
            <person name="Watanabe A."/>
            <person name="Idesawa K."/>
            <person name="Iriguchi M."/>
            <person name="Kawashima K."/>
            <person name="Kohara M."/>
            <person name="Matsumoto M."/>
            <person name="Shimpo S."/>
            <person name="Tsuruoka H."/>
            <person name="Wada T."/>
            <person name="Yamada M."/>
            <person name="Tabata S."/>
        </authorList>
    </citation>
    <scope>NUCLEOTIDE SEQUENCE [LARGE SCALE GENOMIC DNA]</scope>
    <source>
        <strain>JCM 10833 / BCRC 13528 / IAM 13628 / NBRC 14792 / USDA 110</strain>
    </source>
</reference>
<dbReference type="EC" id="3.6.1.-" evidence="1"/>
<dbReference type="EMBL" id="BA000040">
    <property type="protein sequence ID" value="BAC45701.1"/>
    <property type="molecule type" value="Genomic_DNA"/>
</dbReference>
<dbReference type="RefSeq" id="NP_767076.1">
    <property type="nucleotide sequence ID" value="NC_004463.1"/>
</dbReference>
<dbReference type="RefSeq" id="WP_011083268.1">
    <property type="nucleotide sequence ID" value="NC_004463.1"/>
</dbReference>
<dbReference type="SMR" id="Q89X78"/>
<dbReference type="FunCoup" id="Q89X78">
    <property type="interactions" value="277"/>
</dbReference>
<dbReference type="STRING" id="224911.AAV28_41430"/>
<dbReference type="EnsemblBacteria" id="BAC45701">
    <property type="protein sequence ID" value="BAC45701"/>
    <property type="gene ID" value="BAC45701"/>
</dbReference>
<dbReference type="GeneID" id="46495582"/>
<dbReference type="KEGG" id="bja:blr0436"/>
<dbReference type="PATRIC" id="fig|224911.44.peg.8966"/>
<dbReference type="eggNOG" id="COG1051">
    <property type="taxonomic scope" value="Bacteria"/>
</dbReference>
<dbReference type="HOGENOM" id="CLU_087195_3_0_5"/>
<dbReference type="InParanoid" id="Q89X78"/>
<dbReference type="OrthoDB" id="9816040at2"/>
<dbReference type="PhylomeDB" id="Q89X78"/>
<dbReference type="Proteomes" id="UP000002526">
    <property type="component" value="Chromosome"/>
</dbReference>
<dbReference type="GO" id="GO:0034432">
    <property type="term" value="F:bis(5'-adenosyl)-pentaphosphatase activity"/>
    <property type="evidence" value="ECO:0000318"/>
    <property type="project" value="GO_Central"/>
</dbReference>
<dbReference type="GO" id="GO:0008893">
    <property type="term" value="F:guanosine-3',5'-bis(diphosphate) 3'-diphosphatase activity"/>
    <property type="evidence" value="ECO:0000318"/>
    <property type="project" value="GO_Central"/>
</dbReference>
<dbReference type="GO" id="GO:0006753">
    <property type="term" value="P:nucleoside phosphate metabolic process"/>
    <property type="evidence" value="ECO:0000318"/>
    <property type="project" value="GO_Central"/>
</dbReference>
<dbReference type="GO" id="GO:0019693">
    <property type="term" value="P:ribose phosphate metabolic process"/>
    <property type="evidence" value="ECO:0000318"/>
    <property type="project" value="GO_Central"/>
</dbReference>
<dbReference type="CDD" id="cd03671">
    <property type="entry name" value="NUDIX_Ap4A_hydrolase_plant_like"/>
    <property type="match status" value="1"/>
</dbReference>
<dbReference type="Gene3D" id="3.90.79.10">
    <property type="entry name" value="Nucleoside Triphosphate Pyrophosphohydrolase"/>
    <property type="match status" value="1"/>
</dbReference>
<dbReference type="HAMAP" id="MF_00298">
    <property type="entry name" value="Nudix_RppH"/>
    <property type="match status" value="1"/>
</dbReference>
<dbReference type="InterPro" id="IPR015797">
    <property type="entry name" value="NUDIX_hydrolase-like_dom_sf"/>
</dbReference>
<dbReference type="InterPro" id="IPR000086">
    <property type="entry name" value="NUDIX_hydrolase_dom"/>
</dbReference>
<dbReference type="InterPro" id="IPR022927">
    <property type="entry name" value="RppH"/>
</dbReference>
<dbReference type="NCBIfam" id="NF001938">
    <property type="entry name" value="PRK00714.1-5"/>
    <property type="match status" value="1"/>
</dbReference>
<dbReference type="PANTHER" id="PTHR11839:SF22">
    <property type="entry name" value="NUDIX HYDROLASE 26, CHLOROPLASTIC"/>
    <property type="match status" value="1"/>
</dbReference>
<dbReference type="PANTHER" id="PTHR11839">
    <property type="entry name" value="UDP/ADP-SUGAR PYROPHOSPHATASE"/>
    <property type="match status" value="1"/>
</dbReference>
<dbReference type="Pfam" id="PF00293">
    <property type="entry name" value="NUDIX"/>
    <property type="match status" value="1"/>
</dbReference>
<dbReference type="SUPFAM" id="SSF55811">
    <property type="entry name" value="Nudix"/>
    <property type="match status" value="1"/>
</dbReference>
<dbReference type="PROSITE" id="PS51462">
    <property type="entry name" value="NUDIX"/>
    <property type="match status" value="1"/>
</dbReference>
<accession>Q89X78</accession>
<feature type="chain" id="PRO_0000056997" description="RNA pyrophosphohydrolase">
    <location>
        <begin position="1"/>
        <end position="167"/>
    </location>
</feature>
<feature type="domain" description="Nudix hydrolase" evidence="1">
    <location>
        <begin position="8"/>
        <end position="159"/>
    </location>
</feature>
<feature type="short sequence motif" description="Nudix box">
    <location>
        <begin position="47"/>
        <end position="68"/>
    </location>
</feature>
<gene>
    <name evidence="1" type="primary">rppH</name>
    <name evidence="1" type="synonym">nudH</name>
    <name type="ordered locus">blr0436</name>
</gene>
<evidence type="ECO:0000255" key="1">
    <source>
        <dbReference type="HAMAP-Rule" id="MF_00298"/>
    </source>
</evidence>
<comment type="function">
    <text evidence="1">Accelerates the degradation of transcripts by removing pyrophosphate from the 5'-end of triphosphorylated RNA, leading to a more labile monophosphorylated state that can stimulate subsequent ribonuclease cleavage.</text>
</comment>
<comment type="cofactor">
    <cofactor evidence="1">
        <name>a divalent metal cation</name>
        <dbReference type="ChEBI" id="CHEBI:60240"/>
    </cofactor>
</comment>
<comment type="similarity">
    <text evidence="1">Belongs to the Nudix hydrolase family. RppH subfamily.</text>
</comment>
<name>RPPH_BRADU</name>
<protein>
    <recommendedName>
        <fullName evidence="1">RNA pyrophosphohydrolase</fullName>
        <ecNumber evidence="1">3.6.1.-</ecNumber>
    </recommendedName>
    <alternativeName>
        <fullName evidence="1">(Di)nucleoside polyphosphate hydrolase</fullName>
    </alternativeName>
</protein>
<organism>
    <name type="scientific">Bradyrhizobium diazoefficiens (strain JCM 10833 / BCRC 13528 / IAM 13628 / NBRC 14792 / USDA 110)</name>
    <dbReference type="NCBI Taxonomy" id="224911"/>
    <lineage>
        <taxon>Bacteria</taxon>
        <taxon>Pseudomonadati</taxon>
        <taxon>Pseudomonadota</taxon>
        <taxon>Alphaproteobacteria</taxon>
        <taxon>Hyphomicrobiales</taxon>
        <taxon>Nitrobacteraceae</taxon>
        <taxon>Bradyrhizobium</taxon>
    </lineage>
</organism>
<keyword id="KW-0378">Hydrolase</keyword>
<keyword id="KW-1185">Reference proteome</keyword>
<sequence>MARYEDLPYRTCVGVMLINAKGLVFIGRRAGGIEHIDDTHVWQMPQGGVDPGEDTWAAAKRELYEETSVRSVERLGEVPDWLIYDIPRTVAGRAWKGRYRGQRQKWFAVRFTGKDSEINVENPGGGHKAEFVSWRWEPMKNLPGLIIPFKRPVYERVVKEFSALAEE</sequence>